<gene>
    <name type="primary">dapAL</name>
    <name type="ordered locus">TON_0506</name>
</gene>
<feature type="chain" id="PRO_1000124074" description="Uncharacterized DapA-like lyase TON_0506">
    <location>
        <begin position="1"/>
        <end position="293"/>
    </location>
</feature>
<feature type="active site" description="Charge relay system" evidence="1">
    <location>
        <position position="43"/>
    </location>
</feature>
<feature type="active site" description="Charge relay system" evidence="1">
    <location>
        <position position="105"/>
    </location>
</feature>
<feature type="active site" description="Proton donor" evidence="1">
    <location>
        <position position="131"/>
    </location>
</feature>
<feature type="active site" description="Schiff-base intermediate with substrate" evidence="1">
    <location>
        <position position="159"/>
    </location>
</feature>
<comment type="subunit">
    <text evidence="1">Homotetramer.</text>
</comment>
<comment type="subcellular location">
    <subcellularLocation>
        <location evidence="2">Cytoplasm</location>
    </subcellularLocation>
</comment>
<comment type="similarity">
    <text evidence="2">Belongs to the DapA family.</text>
</comment>
<proteinExistence type="inferred from homology"/>
<protein>
    <recommendedName>
        <fullName>Uncharacterized DapA-like lyase TON_0506</fullName>
        <ecNumber>4.-.-.-</ecNumber>
    </recommendedName>
</protein>
<keyword id="KW-0963">Cytoplasm</keyword>
<keyword id="KW-0456">Lyase</keyword>
<keyword id="KW-0704">Schiff base</keyword>
<name>DAPAL_THEON</name>
<reference key="1">
    <citation type="journal article" date="2008" name="J. Bacteriol.">
        <title>The complete genome sequence of Thermococcus onnurineus NA1 reveals a mixed heterotrophic and carboxydotrophic metabolism.</title>
        <authorList>
            <person name="Lee H.S."/>
            <person name="Kang S.G."/>
            <person name="Bae S.S."/>
            <person name="Lim J.K."/>
            <person name="Cho Y."/>
            <person name="Kim Y.J."/>
            <person name="Jeon J.H."/>
            <person name="Cha S.-S."/>
            <person name="Kwon K.K."/>
            <person name="Kim H.-T."/>
            <person name="Park C.-J."/>
            <person name="Lee H.-W."/>
            <person name="Kim S.I."/>
            <person name="Chun J."/>
            <person name="Colwell R.R."/>
            <person name="Kim S.-J."/>
            <person name="Lee J.-H."/>
        </authorList>
    </citation>
    <scope>NUCLEOTIDE SEQUENCE [LARGE SCALE GENOMIC DNA]</scope>
    <source>
        <strain>NA1</strain>
    </source>
</reference>
<accession>B6YU51</accession>
<sequence>MRGVIVPLVTPFNEDYSIDVPALEEHIDFLQKAGVHGIFINATTGEFTSLSVEERKFLAEKGRELVNTTFYLVGTASTNTFEVIELTKHAQDLGADYVVIAPPYYCPLNETALFRHYSMVAERTDIPIILYNIPSCANPLSVQLIKRLALEYSNIAGVKETIDSVNHVRDVIIEVKGEREDFMVFTGLDQHFLNTLILGGDGGIMACANFAPEVHLALYKAFQEKRFKDAFIYAQKLARLSKVYDLASSFGSAIKLAMSLRGFSIKPVLRPPYIIDGDEVKEEIRKLLREVLY</sequence>
<organism>
    <name type="scientific">Thermococcus onnurineus (strain NA1)</name>
    <dbReference type="NCBI Taxonomy" id="523850"/>
    <lineage>
        <taxon>Archaea</taxon>
        <taxon>Methanobacteriati</taxon>
        <taxon>Methanobacteriota</taxon>
        <taxon>Thermococci</taxon>
        <taxon>Thermococcales</taxon>
        <taxon>Thermococcaceae</taxon>
        <taxon>Thermococcus</taxon>
    </lineage>
</organism>
<evidence type="ECO:0000250" key="1"/>
<evidence type="ECO:0000305" key="2"/>
<dbReference type="EC" id="4.-.-.-"/>
<dbReference type="EMBL" id="CP000855">
    <property type="protein sequence ID" value="ACJ15993.1"/>
    <property type="molecule type" value="Genomic_DNA"/>
</dbReference>
<dbReference type="RefSeq" id="WP_012571465.1">
    <property type="nucleotide sequence ID" value="NC_011529.1"/>
</dbReference>
<dbReference type="SMR" id="B6YU51"/>
<dbReference type="STRING" id="523850.TON_0506"/>
<dbReference type="GeneID" id="7016803"/>
<dbReference type="KEGG" id="ton:TON_0506"/>
<dbReference type="PATRIC" id="fig|523850.10.peg.507"/>
<dbReference type="eggNOG" id="arCOG04172">
    <property type="taxonomic scope" value="Archaea"/>
</dbReference>
<dbReference type="HOGENOM" id="CLU_049343_5_1_2"/>
<dbReference type="OrthoDB" id="33636at2157"/>
<dbReference type="Proteomes" id="UP000002727">
    <property type="component" value="Chromosome"/>
</dbReference>
<dbReference type="GO" id="GO:0005737">
    <property type="term" value="C:cytoplasm"/>
    <property type="evidence" value="ECO:0007669"/>
    <property type="project" value="UniProtKB-SubCell"/>
</dbReference>
<dbReference type="GO" id="GO:0008675">
    <property type="term" value="F:2-dehydro-3-deoxy-phosphogluconate aldolase activity"/>
    <property type="evidence" value="ECO:0007669"/>
    <property type="project" value="UniProtKB-ARBA"/>
</dbReference>
<dbReference type="GO" id="GO:0008840">
    <property type="term" value="F:4-hydroxy-tetrahydrodipicolinate synthase activity"/>
    <property type="evidence" value="ECO:0007669"/>
    <property type="project" value="TreeGrafter"/>
</dbReference>
<dbReference type="GO" id="GO:0044281">
    <property type="term" value="P:small molecule metabolic process"/>
    <property type="evidence" value="ECO:0007669"/>
    <property type="project" value="UniProtKB-ARBA"/>
</dbReference>
<dbReference type="CDD" id="cd00408">
    <property type="entry name" value="DHDPS-like"/>
    <property type="match status" value="1"/>
</dbReference>
<dbReference type="Gene3D" id="3.20.20.70">
    <property type="entry name" value="Aldolase class I"/>
    <property type="match status" value="1"/>
</dbReference>
<dbReference type="InterPro" id="IPR013785">
    <property type="entry name" value="Aldolase_TIM"/>
</dbReference>
<dbReference type="InterPro" id="IPR002220">
    <property type="entry name" value="DapA-like"/>
</dbReference>
<dbReference type="InterPro" id="IPR020625">
    <property type="entry name" value="Schiff_base-form_aldolases_AS"/>
</dbReference>
<dbReference type="PANTHER" id="PTHR12128:SF66">
    <property type="entry name" value="4-HYDROXY-2-OXOGLUTARATE ALDOLASE, MITOCHONDRIAL"/>
    <property type="match status" value="1"/>
</dbReference>
<dbReference type="PANTHER" id="PTHR12128">
    <property type="entry name" value="DIHYDRODIPICOLINATE SYNTHASE"/>
    <property type="match status" value="1"/>
</dbReference>
<dbReference type="Pfam" id="PF00701">
    <property type="entry name" value="DHDPS"/>
    <property type="match status" value="1"/>
</dbReference>
<dbReference type="PIRSF" id="PIRSF001365">
    <property type="entry name" value="DHDPS"/>
    <property type="match status" value="1"/>
</dbReference>
<dbReference type="PRINTS" id="PR00146">
    <property type="entry name" value="DHPICSNTHASE"/>
</dbReference>
<dbReference type="SMART" id="SM01130">
    <property type="entry name" value="DHDPS"/>
    <property type="match status" value="1"/>
</dbReference>
<dbReference type="SUPFAM" id="SSF51569">
    <property type="entry name" value="Aldolase"/>
    <property type="match status" value="1"/>
</dbReference>
<dbReference type="PROSITE" id="PS00666">
    <property type="entry name" value="DHDPS_2"/>
    <property type="match status" value="1"/>
</dbReference>